<feature type="chain" id="PRO_0000055194" description="Putative ATP-dependent RNA helicase rha-2">
    <location>
        <begin position="1"/>
        <end position="1148"/>
    </location>
</feature>
<feature type="domain" description="Helicase ATP-binding" evidence="1">
    <location>
        <begin position="246"/>
        <end position="412"/>
    </location>
</feature>
<feature type="domain" description="Helicase C-terminal" evidence="2">
    <location>
        <begin position="463"/>
        <end position="703"/>
    </location>
</feature>
<feature type="region of interest" description="Disordered" evidence="3">
    <location>
        <begin position="1"/>
        <end position="51"/>
    </location>
</feature>
<feature type="region of interest" description="Disordered" evidence="3">
    <location>
        <begin position="101"/>
        <end position="163"/>
    </location>
</feature>
<feature type="short sequence motif" description="DEAH box">
    <location>
        <begin position="355"/>
        <end position="358"/>
    </location>
</feature>
<feature type="compositionally biased region" description="Basic and acidic residues" evidence="3">
    <location>
        <begin position="1"/>
        <end position="10"/>
    </location>
</feature>
<feature type="compositionally biased region" description="Acidic residues" evidence="3">
    <location>
        <begin position="138"/>
        <end position="160"/>
    </location>
</feature>
<feature type="binding site" evidence="1">
    <location>
        <begin position="259"/>
        <end position="266"/>
    </location>
    <ligand>
        <name>ATP</name>
        <dbReference type="ChEBI" id="CHEBI:30616"/>
    </ligand>
</feature>
<proteinExistence type="inferred from homology"/>
<organism>
    <name type="scientific">Caenorhabditis elegans</name>
    <dbReference type="NCBI Taxonomy" id="6239"/>
    <lineage>
        <taxon>Eukaryota</taxon>
        <taxon>Metazoa</taxon>
        <taxon>Ecdysozoa</taxon>
        <taxon>Nematoda</taxon>
        <taxon>Chromadorea</taxon>
        <taxon>Rhabditida</taxon>
        <taxon>Rhabditina</taxon>
        <taxon>Rhabditomorpha</taxon>
        <taxon>Rhabditoidea</taxon>
        <taxon>Rhabditidae</taxon>
        <taxon>Peloderinae</taxon>
        <taxon>Caenorhabditis</taxon>
    </lineage>
</organism>
<name>RHA2_CAEEL</name>
<dbReference type="EC" id="3.6.4.13"/>
<dbReference type="EMBL" id="FO080280">
    <property type="protein sequence ID" value="CCD62570.1"/>
    <property type="molecule type" value="Genomic_DNA"/>
</dbReference>
<dbReference type="PIR" id="H88533">
    <property type="entry name" value="H88533"/>
</dbReference>
<dbReference type="RefSeq" id="NP_498895.1">
    <property type="nucleotide sequence ID" value="NM_066494.3"/>
</dbReference>
<dbReference type="SMR" id="P34305"/>
<dbReference type="BioGRID" id="41411">
    <property type="interactions" value="6"/>
</dbReference>
<dbReference type="FunCoup" id="P34305">
    <property type="interactions" value="2955"/>
</dbReference>
<dbReference type="IntAct" id="P34305">
    <property type="interactions" value="1"/>
</dbReference>
<dbReference type="STRING" id="6239.C06E1.10.1"/>
<dbReference type="iPTMnet" id="P34305"/>
<dbReference type="PaxDb" id="6239-C06E1.10"/>
<dbReference type="PeptideAtlas" id="P34305"/>
<dbReference type="EnsemblMetazoa" id="C06E1.10.1">
    <property type="protein sequence ID" value="C06E1.10.1"/>
    <property type="gene ID" value="WBGene00015525"/>
</dbReference>
<dbReference type="GeneID" id="176207"/>
<dbReference type="KEGG" id="cel:CELE_C06E1.10"/>
<dbReference type="UCSC" id="C06E1.10">
    <property type="organism name" value="c. elegans"/>
</dbReference>
<dbReference type="AGR" id="WB:WBGene00015525"/>
<dbReference type="CTD" id="176207"/>
<dbReference type="WormBase" id="C06E1.10">
    <property type="protein sequence ID" value="CE29563"/>
    <property type="gene ID" value="WBGene00015525"/>
    <property type="gene designation" value="rha-2"/>
</dbReference>
<dbReference type="eggNOG" id="KOG0926">
    <property type="taxonomic scope" value="Eukaryota"/>
</dbReference>
<dbReference type="GeneTree" id="ENSGT00550000074985"/>
<dbReference type="HOGENOM" id="CLU_001832_0_0_1"/>
<dbReference type="InParanoid" id="P34305"/>
<dbReference type="OMA" id="KYAYHCA"/>
<dbReference type="OrthoDB" id="10025033at2759"/>
<dbReference type="PhylomeDB" id="P34305"/>
<dbReference type="Reactome" id="R-CEL-6791226">
    <property type="pathway name" value="Major pathway of rRNA processing in the nucleolus and cytosol"/>
</dbReference>
<dbReference type="PRO" id="PR:P34305"/>
<dbReference type="Proteomes" id="UP000001940">
    <property type="component" value="Chromosome III"/>
</dbReference>
<dbReference type="Bgee" id="WBGene00015525">
    <property type="expression patterns" value="Expressed in germ line (C elegans) and 4 other cell types or tissues"/>
</dbReference>
<dbReference type="GO" id="GO:0005730">
    <property type="term" value="C:nucleolus"/>
    <property type="evidence" value="ECO:0000318"/>
    <property type="project" value="GO_Central"/>
</dbReference>
<dbReference type="GO" id="GO:0005524">
    <property type="term" value="F:ATP binding"/>
    <property type="evidence" value="ECO:0007669"/>
    <property type="project" value="UniProtKB-KW"/>
</dbReference>
<dbReference type="GO" id="GO:0016887">
    <property type="term" value="F:ATP hydrolysis activity"/>
    <property type="evidence" value="ECO:0007669"/>
    <property type="project" value="RHEA"/>
</dbReference>
<dbReference type="GO" id="GO:0004386">
    <property type="term" value="F:helicase activity"/>
    <property type="evidence" value="ECO:0000318"/>
    <property type="project" value="GO_Central"/>
</dbReference>
<dbReference type="GO" id="GO:0003723">
    <property type="term" value="F:RNA binding"/>
    <property type="evidence" value="ECO:0000318"/>
    <property type="project" value="GO_Central"/>
</dbReference>
<dbReference type="GO" id="GO:0003724">
    <property type="term" value="F:RNA helicase activity"/>
    <property type="evidence" value="ECO:0007669"/>
    <property type="project" value="UniProtKB-EC"/>
</dbReference>
<dbReference type="GO" id="GO:0000462">
    <property type="term" value="P:maturation of SSU-rRNA from tricistronic rRNA transcript (SSU-rRNA, 5.8S rRNA, LSU-rRNA)"/>
    <property type="evidence" value="ECO:0000318"/>
    <property type="project" value="GO_Central"/>
</dbReference>
<dbReference type="CDD" id="cd17982">
    <property type="entry name" value="DEXHc_DHX37"/>
    <property type="match status" value="1"/>
</dbReference>
<dbReference type="CDD" id="cd18791">
    <property type="entry name" value="SF2_C_RHA"/>
    <property type="match status" value="1"/>
</dbReference>
<dbReference type="FunFam" id="3.40.50.300:FF:000637">
    <property type="entry name" value="ATP-dependent RNA helicase DHX37/DHR1"/>
    <property type="match status" value="1"/>
</dbReference>
<dbReference type="FunFam" id="1.20.120.1080:FF:000071">
    <property type="entry name" value="CBN-RHA-2 protein"/>
    <property type="match status" value="1"/>
</dbReference>
<dbReference type="FunFam" id="3.40.50.300:FF:002147">
    <property type="entry name" value="Putative ATP-dependent RNA helicase"/>
    <property type="match status" value="1"/>
</dbReference>
<dbReference type="Gene3D" id="1.20.120.1080">
    <property type="match status" value="1"/>
</dbReference>
<dbReference type="Gene3D" id="3.40.50.300">
    <property type="entry name" value="P-loop containing nucleotide triphosphate hydrolases"/>
    <property type="match status" value="3"/>
</dbReference>
<dbReference type="InterPro" id="IPR011709">
    <property type="entry name" value="DEAD-box_helicase_OB_fold"/>
</dbReference>
<dbReference type="InterPro" id="IPR011545">
    <property type="entry name" value="DEAD/DEAH_box_helicase_dom"/>
</dbReference>
<dbReference type="InterPro" id="IPR056371">
    <property type="entry name" value="DHX37-like_C"/>
</dbReference>
<dbReference type="InterPro" id="IPR002464">
    <property type="entry name" value="DNA/RNA_helicase_DEAH_CS"/>
</dbReference>
<dbReference type="InterPro" id="IPR048333">
    <property type="entry name" value="HA2_WH"/>
</dbReference>
<dbReference type="InterPro" id="IPR007502">
    <property type="entry name" value="Helicase-assoc_dom"/>
</dbReference>
<dbReference type="InterPro" id="IPR014001">
    <property type="entry name" value="Helicase_ATP-bd"/>
</dbReference>
<dbReference type="InterPro" id="IPR001650">
    <property type="entry name" value="Helicase_C-like"/>
</dbReference>
<dbReference type="InterPro" id="IPR027417">
    <property type="entry name" value="P-loop_NTPase"/>
</dbReference>
<dbReference type="PANTHER" id="PTHR18934">
    <property type="entry name" value="ATP-DEPENDENT RNA HELICASE"/>
    <property type="match status" value="1"/>
</dbReference>
<dbReference type="PANTHER" id="PTHR18934:SF99">
    <property type="entry name" value="ATP-DEPENDENT RNA HELICASE DHX37-RELATED"/>
    <property type="match status" value="1"/>
</dbReference>
<dbReference type="Pfam" id="PF00270">
    <property type="entry name" value="DEAD"/>
    <property type="match status" value="1"/>
</dbReference>
<dbReference type="Pfam" id="PF23362">
    <property type="entry name" value="DHX37_C"/>
    <property type="match status" value="1"/>
</dbReference>
<dbReference type="Pfam" id="PF21010">
    <property type="entry name" value="HA2_C"/>
    <property type="match status" value="1"/>
</dbReference>
<dbReference type="Pfam" id="PF04408">
    <property type="entry name" value="HA2_N"/>
    <property type="match status" value="1"/>
</dbReference>
<dbReference type="Pfam" id="PF00271">
    <property type="entry name" value="Helicase_C"/>
    <property type="match status" value="1"/>
</dbReference>
<dbReference type="Pfam" id="PF07717">
    <property type="entry name" value="OB_NTP_bind"/>
    <property type="match status" value="1"/>
</dbReference>
<dbReference type="SMART" id="SM00487">
    <property type="entry name" value="DEXDc"/>
    <property type="match status" value="1"/>
</dbReference>
<dbReference type="SMART" id="SM00847">
    <property type="entry name" value="HA2"/>
    <property type="match status" value="1"/>
</dbReference>
<dbReference type="SMART" id="SM00490">
    <property type="entry name" value="HELICc"/>
    <property type="match status" value="1"/>
</dbReference>
<dbReference type="SUPFAM" id="SSF52540">
    <property type="entry name" value="P-loop containing nucleoside triphosphate hydrolases"/>
    <property type="match status" value="1"/>
</dbReference>
<dbReference type="PROSITE" id="PS00690">
    <property type="entry name" value="DEAH_ATP_HELICASE"/>
    <property type="match status" value="1"/>
</dbReference>
<dbReference type="PROSITE" id="PS51192">
    <property type="entry name" value="HELICASE_ATP_BIND_1"/>
    <property type="match status" value="1"/>
</dbReference>
<dbReference type="PROSITE" id="PS51194">
    <property type="entry name" value="HELICASE_CTER"/>
    <property type="match status" value="1"/>
</dbReference>
<protein>
    <recommendedName>
        <fullName>Putative ATP-dependent RNA helicase rha-2</fullName>
        <ecNumber>3.6.4.13</ecNumber>
    </recommendedName>
</protein>
<sequence length="1148" mass="129963">MGKRKTKEDNASEDYDANELMIVPGEKRKKLEKSGEKSATGGKKNRNFAKEKEVAKLTKQAKRKLAAVQSRKALKQTQEELFAGLAEFQLDPSKLCQLSSSTKLSKEPEKAPVFPEKLKVFSGKTKTEAKRTQQDYYPTDDESSSEEEEEEEEGDNDIEDAGNTVEVKIEPIDLDDVDEAIDGNPETNLDQIVVKREDDEESDNEDILALPTTTVINRKKVIVERSKEIQKSRAELPIFAEEMRIVEAINENLVTVVCGETGSGKTTQIPQFLYEAGYASEGELIGITEPRRVAAIAMAQRVGVELAKPDEVSYQIRYEGTRSETTNILFMTDGVLMKEMEQDVMLKKYSVILIDEAHERSMYSDVLIGMLSRIVPLRSKTARPLRLVIMSATLRLDDFTHKKLFPLLTPKVIKVDARQFPVSVHFEKRTPDDYIASAFRKTCRIHETLPPGAILVFVTGQHEVKQLITKLKKRYPVVYETDKNGEVLVKGTKEWKEKKVEAAKSIKLEDFKEETPETEDFEDVDDGLMDGDDMNERGAAEAFDDYEEFENGDGDLSDGKVENSIGAPPADCEPLYCLPLYSLLSMGKQRRVFDETPAGMRLCVISTNVAETSLTIPGVKYVIDGGFEKRRLYDSITGVSRFAVCRISQASGDQRAGRAGRISAGHAYRLYSSAVYQDFVKFADPEILSKPADQLVLHLKSMNIVKVVNFPFPSAPDEQMLESAEKRLCRLGALSESTKNGKTEARITKLGKTLAVFPLAPSYAKFIAMADQHNLMSHAILLISLLSVREPLIPVSSLRGDTPEETKELMKNVLKERRRWCSHTGARRLGDLKVLMHAASVAEQIKYNARECEKVGLRVKALVEARKLRQQLTNIVNASCKKEHAAALDSDLPPPTDQQAQLLRQMVVASFSDRLARRVDRSVGQEEVQKGAYETTLIKGHVFIDPCSVVFTEEPEFVIYQELVQVNEKKLMTSVCAVDKEWLSRLAESYCNYGEQDKNQEPIYDPVKDMVVKTVKVTFGPLNWELPNENRSVPHDIMMYRYFALFLLDGLVFEKLKEYTPKLLAPPSTMVKSWAKLQKRTEMLLNKLIEKEVTTRSSLKEQWLKNENWLLEEYLEWVPESVHQQISLMWPPLEDHEKTIKMGRNKKY</sequence>
<reference key="1">
    <citation type="journal article" date="1994" name="Nature">
        <title>2.2 Mb of contiguous nucleotide sequence from chromosome III of C. elegans.</title>
        <authorList>
            <person name="Wilson R."/>
            <person name="Ainscough R."/>
            <person name="Anderson K."/>
            <person name="Baynes C."/>
            <person name="Berks M."/>
            <person name="Bonfield J."/>
            <person name="Burton J."/>
            <person name="Connell M."/>
            <person name="Copsey T."/>
            <person name="Cooper J."/>
            <person name="Coulson A."/>
            <person name="Craxton M."/>
            <person name="Dear S."/>
            <person name="Du Z."/>
            <person name="Durbin R."/>
            <person name="Favello A."/>
            <person name="Fraser A."/>
            <person name="Fulton L."/>
            <person name="Gardner A."/>
            <person name="Green P."/>
            <person name="Hawkins T."/>
            <person name="Hillier L."/>
            <person name="Jier M."/>
            <person name="Johnston L."/>
            <person name="Jones M."/>
            <person name="Kershaw J."/>
            <person name="Kirsten J."/>
            <person name="Laisster N."/>
            <person name="Latreille P."/>
            <person name="Lightning J."/>
            <person name="Lloyd C."/>
            <person name="Mortimore B."/>
            <person name="O'Callaghan M."/>
            <person name="Parsons J."/>
            <person name="Percy C."/>
            <person name="Rifken L."/>
            <person name="Roopra A."/>
            <person name="Saunders D."/>
            <person name="Shownkeen R."/>
            <person name="Sims M."/>
            <person name="Smaldon N."/>
            <person name="Smith A."/>
            <person name="Smith M."/>
            <person name="Sonnhammer E."/>
            <person name="Staden R."/>
            <person name="Sulston J."/>
            <person name="Thierry-Mieg J."/>
            <person name="Thomas K."/>
            <person name="Vaudin M."/>
            <person name="Vaughan K."/>
            <person name="Waterston R."/>
            <person name="Watson A."/>
            <person name="Weinstock L."/>
            <person name="Wilkinson-Sproat J."/>
            <person name="Wohldman P."/>
        </authorList>
    </citation>
    <scope>NUCLEOTIDE SEQUENCE [LARGE SCALE GENOMIC DNA]</scope>
    <source>
        <strain>Bristol N2</strain>
    </source>
</reference>
<reference key="2">
    <citation type="journal article" date="1998" name="Science">
        <title>Genome sequence of the nematode C. elegans: a platform for investigating biology.</title>
        <authorList>
            <consortium name="The C. elegans sequencing consortium"/>
        </authorList>
    </citation>
    <scope>NUCLEOTIDE SEQUENCE [LARGE SCALE GENOMIC DNA]</scope>
    <source>
        <strain>Bristol N2</strain>
    </source>
</reference>
<accession>P34305</accession>
<keyword id="KW-0067">ATP-binding</keyword>
<keyword id="KW-0347">Helicase</keyword>
<keyword id="KW-0378">Hydrolase</keyword>
<keyword id="KW-0547">Nucleotide-binding</keyword>
<keyword id="KW-1185">Reference proteome</keyword>
<keyword id="KW-0694">RNA-binding</keyword>
<comment type="function">
    <text>Probable ATP-binding RNA helicase.</text>
</comment>
<comment type="catalytic activity">
    <reaction>
        <text>ATP + H2O = ADP + phosphate + H(+)</text>
        <dbReference type="Rhea" id="RHEA:13065"/>
        <dbReference type="ChEBI" id="CHEBI:15377"/>
        <dbReference type="ChEBI" id="CHEBI:15378"/>
        <dbReference type="ChEBI" id="CHEBI:30616"/>
        <dbReference type="ChEBI" id="CHEBI:43474"/>
        <dbReference type="ChEBI" id="CHEBI:456216"/>
        <dbReference type="EC" id="3.6.4.13"/>
    </reaction>
</comment>
<comment type="similarity">
    <text evidence="4">Belongs to the DEAD box helicase family. DEAH subfamily.</text>
</comment>
<gene>
    <name type="primary">rha-2</name>
    <name type="ORF">C06E1.10</name>
</gene>
<evidence type="ECO:0000255" key="1">
    <source>
        <dbReference type="PROSITE-ProRule" id="PRU00541"/>
    </source>
</evidence>
<evidence type="ECO:0000255" key="2">
    <source>
        <dbReference type="PROSITE-ProRule" id="PRU00542"/>
    </source>
</evidence>
<evidence type="ECO:0000256" key="3">
    <source>
        <dbReference type="SAM" id="MobiDB-lite"/>
    </source>
</evidence>
<evidence type="ECO:0000305" key="4"/>